<organism>
    <name type="scientific">Gallus gallus</name>
    <name type="common">Chicken</name>
    <dbReference type="NCBI Taxonomy" id="9031"/>
    <lineage>
        <taxon>Eukaryota</taxon>
        <taxon>Metazoa</taxon>
        <taxon>Chordata</taxon>
        <taxon>Craniata</taxon>
        <taxon>Vertebrata</taxon>
        <taxon>Euteleostomi</taxon>
        <taxon>Archelosauria</taxon>
        <taxon>Archosauria</taxon>
        <taxon>Dinosauria</taxon>
        <taxon>Saurischia</taxon>
        <taxon>Theropoda</taxon>
        <taxon>Coelurosauria</taxon>
        <taxon>Aves</taxon>
        <taxon>Neognathae</taxon>
        <taxon>Galloanserae</taxon>
        <taxon>Galliformes</taxon>
        <taxon>Phasianidae</taxon>
        <taxon>Phasianinae</taxon>
        <taxon>Gallus</taxon>
    </lineage>
</organism>
<feature type="initiator methionine" description="Removed" evidence="2">
    <location>
        <position position="1"/>
    </location>
</feature>
<feature type="chain" id="PRO_0000053274" description="Hemoglobin subunit rho">
    <location>
        <begin position="2"/>
        <end position="147"/>
    </location>
</feature>
<feature type="domain" description="Globin" evidence="1">
    <location>
        <begin position="3"/>
        <end position="147"/>
    </location>
</feature>
<feature type="binding site" description="distal binding residue">
    <location>
        <position position="64"/>
    </location>
    <ligand>
        <name>heme b</name>
        <dbReference type="ChEBI" id="CHEBI:60344"/>
    </ligand>
    <ligandPart>
        <name>Fe</name>
        <dbReference type="ChEBI" id="CHEBI:18248"/>
    </ligandPart>
</feature>
<feature type="binding site" description="proximal binding residue">
    <location>
        <position position="93"/>
    </location>
    <ligand>
        <name>heme b</name>
        <dbReference type="ChEBI" id="CHEBI:60344"/>
    </ligand>
    <ligandPart>
        <name>Fe</name>
        <dbReference type="ChEBI" id="CHEBI:18248"/>
    </ligandPart>
</feature>
<feature type="sequence conflict" description="In Ref. 4; AA sequence." evidence="3" ref="4">
    <original>T</original>
    <variation>E</variation>
    <location>
        <position position="126"/>
    </location>
</feature>
<feature type="sequence conflict" description="In Ref. 4; AA sequence." evidence="3" ref="4">
    <original>V</original>
    <variation>A</variation>
    <location>
        <position position="130"/>
    </location>
</feature>
<feature type="sequence conflict" description="In Ref. 4; AA sequence." evidence="3" ref="4">
    <original>H</original>
    <variation>K</variation>
    <location>
        <position position="140"/>
    </location>
</feature>
<feature type="sequence conflict" description="In Ref. 4; AA sequence." evidence="3" ref="4">
    <original>Y</original>
    <variation>R</variation>
    <location>
        <position position="144"/>
    </location>
</feature>
<name>HBRH_CHICK</name>
<keyword id="KW-0903">Direct protein sequencing</keyword>
<keyword id="KW-0349">Heme</keyword>
<keyword id="KW-0408">Iron</keyword>
<keyword id="KW-0479">Metal-binding</keyword>
<keyword id="KW-0561">Oxygen transport</keyword>
<keyword id="KW-1185">Reference proteome</keyword>
<keyword id="KW-0813">Transport</keyword>
<protein>
    <recommendedName>
        <fullName>Hemoglobin subunit rho</fullName>
    </recommendedName>
    <alternativeName>
        <fullName>Hemoglobin rho chain</fullName>
    </alternativeName>
    <alternativeName>
        <fullName>Rho-globin</fullName>
    </alternativeName>
</protein>
<proteinExistence type="evidence at protein level"/>
<sequence length="147" mass="16589">MVHWSAEEKQLITSVWSKVNVEECGAEALARLLIVYPWTQRFFDNFGNLSSPTAIIGNPKVRAHGKKVLSSFGEAVKNLDNIKNTYAKLSELHCEKLHVDPENFRLLGNILIIVLAAHFTKDFTPTCQAVWQKLVSVVAHALAYKYH</sequence>
<comment type="function">
    <text>The rho chain is the major early embryonic beta-type hemoglobin chain.</text>
</comment>
<comment type="similarity">
    <text evidence="1">Belongs to the globin family.</text>
</comment>
<accession>P02127</accession>
<evidence type="ECO:0000255" key="1">
    <source>
        <dbReference type="PROSITE-ProRule" id="PRU00238"/>
    </source>
</evidence>
<evidence type="ECO:0000269" key="2">
    <source>
    </source>
</evidence>
<evidence type="ECO:0000305" key="3"/>
<dbReference type="EMBL" id="V00412">
    <property type="protein sequence ID" value="CAA23703.1"/>
    <property type="molecule type" value="mRNA"/>
</dbReference>
<dbReference type="EMBL" id="K00823">
    <property type="protein sequence ID" value="AAA48806.1"/>
    <property type="molecule type" value="Genomic_DNA"/>
</dbReference>
<dbReference type="EMBL" id="L17432">
    <property type="protein sequence ID" value="AAD03345.1"/>
    <property type="molecule type" value="Genomic_DNA"/>
</dbReference>
<dbReference type="PIR" id="I50247">
    <property type="entry name" value="HFCHR"/>
</dbReference>
<dbReference type="RefSeq" id="NP_001004390.1">
    <property type="nucleotide sequence ID" value="NM_001004390.3"/>
</dbReference>
<dbReference type="SMR" id="P02127"/>
<dbReference type="FunCoup" id="P02127">
    <property type="interactions" value="20"/>
</dbReference>
<dbReference type="STRING" id="9031.ENSGALP00000027974"/>
<dbReference type="PaxDb" id="9031-ENSGALP00000027974"/>
<dbReference type="GeneID" id="419079"/>
<dbReference type="KEGG" id="gga:419079"/>
<dbReference type="CTD" id="419079"/>
<dbReference type="VEuPathDB" id="HostDB:geneid_419079"/>
<dbReference type="eggNOG" id="KOG3378">
    <property type="taxonomic scope" value="Eukaryota"/>
</dbReference>
<dbReference type="HOGENOM" id="CLU_003827_10_0_1"/>
<dbReference type="InParanoid" id="P02127"/>
<dbReference type="OMA" id="HAIVSIW"/>
<dbReference type="OrthoDB" id="9886081at2759"/>
<dbReference type="Reactome" id="R-GGA-1237044">
    <property type="pathway name" value="Erythrocytes take up carbon dioxide and release oxygen"/>
</dbReference>
<dbReference type="Reactome" id="R-GGA-1247673">
    <property type="pathway name" value="Erythrocytes take up oxygen and release carbon dioxide"/>
</dbReference>
<dbReference type="Reactome" id="R-GGA-2168880">
    <property type="pathway name" value="Scavenging of heme from plasma"/>
</dbReference>
<dbReference type="Reactome" id="R-GGA-6798695">
    <property type="pathway name" value="Neutrophil degranulation"/>
</dbReference>
<dbReference type="Reactome" id="R-GGA-9707564">
    <property type="pathway name" value="Cytoprotection by HMOX1"/>
</dbReference>
<dbReference type="Reactome" id="R-GGA-9707616">
    <property type="pathway name" value="Heme signaling"/>
</dbReference>
<dbReference type="PRO" id="PR:P02127"/>
<dbReference type="Proteomes" id="UP000000539">
    <property type="component" value="Chromosome 1"/>
</dbReference>
<dbReference type="Bgee" id="ENSGALG00000017347">
    <property type="expression patterns" value="Expressed in lung"/>
</dbReference>
<dbReference type="GO" id="GO:0031838">
    <property type="term" value="C:haptoglobin-hemoglobin complex"/>
    <property type="evidence" value="ECO:0000318"/>
    <property type="project" value="GO_Central"/>
</dbReference>
<dbReference type="GO" id="GO:0005833">
    <property type="term" value="C:hemoglobin complex"/>
    <property type="evidence" value="ECO:0000318"/>
    <property type="project" value="GO_Central"/>
</dbReference>
<dbReference type="GO" id="GO:0020037">
    <property type="term" value="F:heme binding"/>
    <property type="evidence" value="ECO:0000318"/>
    <property type="project" value="GO_Central"/>
</dbReference>
<dbReference type="GO" id="GO:0046872">
    <property type="term" value="F:metal ion binding"/>
    <property type="evidence" value="ECO:0007669"/>
    <property type="project" value="UniProtKB-KW"/>
</dbReference>
<dbReference type="GO" id="GO:0019825">
    <property type="term" value="F:oxygen binding"/>
    <property type="evidence" value="ECO:0000318"/>
    <property type="project" value="GO_Central"/>
</dbReference>
<dbReference type="GO" id="GO:0005344">
    <property type="term" value="F:oxygen carrier activity"/>
    <property type="evidence" value="ECO:0000318"/>
    <property type="project" value="GO_Central"/>
</dbReference>
<dbReference type="GO" id="GO:0098869">
    <property type="term" value="P:cellular oxidant detoxification"/>
    <property type="evidence" value="ECO:0007669"/>
    <property type="project" value="GOC"/>
</dbReference>
<dbReference type="GO" id="GO:0042744">
    <property type="term" value="P:hydrogen peroxide catabolic process"/>
    <property type="evidence" value="ECO:0000318"/>
    <property type="project" value="GO_Central"/>
</dbReference>
<dbReference type="CDD" id="cd08925">
    <property type="entry name" value="Hb-beta-like"/>
    <property type="match status" value="1"/>
</dbReference>
<dbReference type="FunFam" id="1.10.490.10:FF:000001">
    <property type="entry name" value="Hemoglobin subunit beta"/>
    <property type="match status" value="1"/>
</dbReference>
<dbReference type="Gene3D" id="1.10.490.10">
    <property type="entry name" value="Globins"/>
    <property type="match status" value="1"/>
</dbReference>
<dbReference type="InterPro" id="IPR000971">
    <property type="entry name" value="Globin"/>
</dbReference>
<dbReference type="InterPro" id="IPR009050">
    <property type="entry name" value="Globin-like_sf"/>
</dbReference>
<dbReference type="InterPro" id="IPR012292">
    <property type="entry name" value="Globin/Proto"/>
</dbReference>
<dbReference type="InterPro" id="IPR002337">
    <property type="entry name" value="Hemoglobin_b"/>
</dbReference>
<dbReference type="InterPro" id="IPR050056">
    <property type="entry name" value="Hemoglobin_oxygen_transport"/>
</dbReference>
<dbReference type="PANTHER" id="PTHR11442">
    <property type="entry name" value="HEMOGLOBIN FAMILY MEMBER"/>
    <property type="match status" value="1"/>
</dbReference>
<dbReference type="PANTHER" id="PTHR11442:SF7">
    <property type="entry name" value="HEMOGLOBIN SUBUNIT EPSILON"/>
    <property type="match status" value="1"/>
</dbReference>
<dbReference type="Pfam" id="PF00042">
    <property type="entry name" value="Globin"/>
    <property type="match status" value="1"/>
</dbReference>
<dbReference type="PRINTS" id="PR00814">
    <property type="entry name" value="BETAHAEM"/>
</dbReference>
<dbReference type="SUPFAM" id="SSF46458">
    <property type="entry name" value="Globin-like"/>
    <property type="match status" value="1"/>
</dbReference>
<dbReference type="PROSITE" id="PS01033">
    <property type="entry name" value="GLOBIN"/>
    <property type="match status" value="1"/>
</dbReference>
<reference key="1">
    <citation type="journal article" date="1981" name="Proc. Natl. Acad. Sci. U.S.A.">
        <title>cDNA sequence of a new chicken embryonic rho-globin.</title>
        <authorList>
            <person name="Roninson I.B."/>
            <person name="Ingram V.M."/>
        </authorList>
    </citation>
    <scope>NUCLEOTIDE SEQUENCE [MRNA]</scope>
</reference>
<reference key="2">
    <citation type="journal article" date="1983" name="J. Biol. Chem.">
        <title>The nucleotide sequence of the embryonic chicken beta-type globin genes.</title>
        <authorList>
            <person name="Dodgson J.B."/>
            <person name="Stadt S.J."/>
            <person name="Choi O.-R."/>
            <person name="Dolan M."/>
            <person name="Fischer H.D."/>
            <person name="Engel J.D."/>
        </authorList>
    </citation>
    <scope>NUCLEOTIDE SEQUENCE [GENOMIC DNA]</scope>
</reference>
<reference key="3">
    <citation type="journal article" date="1993" name="Genomics">
        <title>Primary sequence, evolution, and repetitive elements of the Gallus gallus (chicken) beta-globin cluster.</title>
        <authorList>
            <person name="Reitman M."/>
            <person name="Grasso J.A."/>
            <person name="Blumenthal R."/>
            <person name="Lewit P."/>
        </authorList>
    </citation>
    <scope>NUCLEOTIDE SEQUENCE [GENOMIC DNA]</scope>
</reference>
<reference key="4">
    <citation type="journal article" date="1981" name="J. Biol. Chem.">
        <title>Complete amino acid sequence of the major early embryonic beta-like globin in chickens.</title>
        <authorList>
            <person name="Chapman B.S."/>
            <person name="Tobin A.J."/>
            <person name="Hood L.E."/>
        </authorList>
    </citation>
    <scope>PROTEIN SEQUENCE OF 2-147</scope>
</reference>